<proteinExistence type="inferred from homology"/>
<protein>
    <recommendedName>
        <fullName>Regulatory protein zeste</fullName>
    </recommendedName>
</protein>
<feature type="chain" id="PRO_0000066574" description="Regulatory protein zeste">
    <location>
        <begin position="1" status="less than"/>
        <end position="268" status="greater than"/>
    </location>
</feature>
<feature type="DNA-binding region" evidence="1">
    <location>
        <begin position="1" status="less than"/>
        <end position="72"/>
    </location>
</feature>
<feature type="region of interest" description="Disordered" evidence="2">
    <location>
        <begin position="94"/>
        <end position="133"/>
    </location>
</feature>
<feature type="compositionally biased region" description="Low complexity" evidence="2">
    <location>
        <begin position="94"/>
        <end position="108"/>
    </location>
</feature>
<feature type="compositionally biased region" description="Basic and acidic residues" evidence="2">
    <location>
        <begin position="110"/>
        <end position="119"/>
    </location>
</feature>
<feature type="non-terminal residue">
    <location>
        <position position="1"/>
    </location>
</feature>
<feature type="non-terminal residue">
    <location>
        <position position="268"/>
    </location>
</feature>
<sequence>TAEEKEVLYTLFHLHEEVIDIKHRKKQRNKYSVRETWDKIVKDFNSHPHVSAMRNIKQIQKFWLNSRLRKQYPYRDGSSSNLSSGSAKISSVSVSVASAVPQQQQQQHHQQHDNVKEEPEYQISPDASEHNPQADTFDEIEMDANDVSEIDEDPMEQQQQQQQEAQAQAQAQAQVQSAAAEMQKMQQVNAVAVAAAAAANATMINTHQINVDQISAEKLTLNDLLHFKTARPREEIILQIKHPSEATATQIHTIPTQAQQHPMATITA</sequence>
<gene>
    <name type="primary">z</name>
</gene>
<comment type="function">
    <text evidence="1">Involved in transvection phenomena (= synapsis-dependent gene expression), where the synaptic pairing of chromosomes carrying genes with which zeste interacts influences the expression of these genes. Zeste binds to DNA and stimulates transcription from a nearby promoter (By similarity).</text>
</comment>
<comment type="subunit">
    <text evidence="1">Self-associates forming complexes of several hundred monomers.</text>
</comment>
<comment type="subcellular location">
    <subcellularLocation>
        <location evidence="1">Nucleus</location>
    </subcellularLocation>
</comment>
<dbReference type="EMBL" id="L13061">
    <property type="protein sequence ID" value="AAA29044.1"/>
    <property type="molecule type" value="Genomic_DNA"/>
</dbReference>
<dbReference type="EMBL" id="L13062">
    <property type="protein sequence ID" value="AAA29045.1"/>
    <property type="molecule type" value="Genomic_DNA"/>
</dbReference>
<dbReference type="EMBL" id="L13063">
    <property type="protein sequence ID" value="AAA29046.1"/>
    <property type="molecule type" value="Genomic_DNA"/>
</dbReference>
<dbReference type="EMBL" id="L13064">
    <property type="protein sequence ID" value="AAA29047.1"/>
    <property type="molecule type" value="Genomic_DNA"/>
</dbReference>
<dbReference type="EMBL" id="L13065">
    <property type="protein sequence ID" value="AAA29048.1"/>
    <property type="molecule type" value="Genomic_DNA"/>
</dbReference>
<dbReference type="EMBL" id="L13066">
    <property type="protein sequence ID" value="AAA29049.1"/>
    <property type="molecule type" value="Genomic_DNA"/>
</dbReference>
<dbReference type="SMR" id="P67855"/>
<dbReference type="EnsemblMetazoa" id="FBtr0202212">
    <property type="protein sequence ID" value="FBpp0200704"/>
    <property type="gene ID" value="FBgn0012801"/>
</dbReference>
<dbReference type="EnsemblMetazoa" id="XM_002040483.2">
    <property type="protein sequence ID" value="XP_002040519.1"/>
    <property type="gene ID" value="LOC6616154"/>
</dbReference>
<dbReference type="GO" id="GO:0005634">
    <property type="term" value="C:nucleus"/>
    <property type="evidence" value="ECO:0007669"/>
    <property type="project" value="UniProtKB-SubCell"/>
</dbReference>
<dbReference type="GO" id="GO:0003677">
    <property type="term" value="F:DNA binding"/>
    <property type="evidence" value="ECO:0007669"/>
    <property type="project" value="UniProtKB-KW"/>
</dbReference>
<dbReference type="InterPro" id="IPR028002">
    <property type="entry name" value="Myb_DNA-bind_5"/>
</dbReference>
<dbReference type="Pfam" id="PF13873">
    <property type="entry name" value="Myb_DNA-bind_5"/>
    <property type="match status" value="1"/>
</dbReference>
<name>ZEST_DROSE</name>
<reference key="1">
    <citation type="journal article" date="1993" name="Mol. Biol. Evol.">
        <title>Population genetics and phylogenetics of DNA sequence variation at multiple loci within the Drosophila melanogaster species complex.</title>
        <authorList>
            <person name="Hey J."/>
            <person name="Kliman R.M."/>
        </authorList>
    </citation>
    <scope>NUCLEOTIDE SEQUENCE [GENOMIC DNA]</scope>
    <source>
        <strain>C1</strain>
        <strain>C2</strain>
        <strain>P1</strain>
        <strain>P2</strain>
        <strain>P3</strain>
        <strain>P4</strain>
    </source>
</reference>
<accession>P67855</accession>
<accession>Q24597</accession>
<accession>Q24598</accession>
<accession>Q24599</accession>
<accession>Q24600</accession>
<accession>Q24601</accession>
<accession>Q24602</accession>
<accession>Q24603</accession>
<accession>Q24604</accession>
<accession>Q27387</accession>
<organism>
    <name type="scientific">Drosophila sechellia</name>
    <name type="common">Fruit fly</name>
    <dbReference type="NCBI Taxonomy" id="7238"/>
    <lineage>
        <taxon>Eukaryota</taxon>
        <taxon>Metazoa</taxon>
        <taxon>Ecdysozoa</taxon>
        <taxon>Arthropoda</taxon>
        <taxon>Hexapoda</taxon>
        <taxon>Insecta</taxon>
        <taxon>Pterygota</taxon>
        <taxon>Neoptera</taxon>
        <taxon>Endopterygota</taxon>
        <taxon>Diptera</taxon>
        <taxon>Brachycera</taxon>
        <taxon>Muscomorpha</taxon>
        <taxon>Ephydroidea</taxon>
        <taxon>Drosophilidae</taxon>
        <taxon>Drosophila</taxon>
        <taxon>Sophophora</taxon>
    </lineage>
</organism>
<keyword id="KW-0238">DNA-binding</keyword>
<keyword id="KW-0539">Nucleus</keyword>
<keyword id="KW-0804">Transcription</keyword>
<keyword id="KW-0805">Transcription regulation</keyword>
<evidence type="ECO:0000250" key="1"/>
<evidence type="ECO:0000256" key="2">
    <source>
        <dbReference type="SAM" id="MobiDB-lite"/>
    </source>
</evidence>